<dbReference type="EC" id="2.3.1.39"/>
<dbReference type="EMBL" id="L42023">
    <property type="protein sequence ID" value="AAC21825.1"/>
    <property type="molecule type" value="Genomic_DNA"/>
</dbReference>
<dbReference type="PIR" id="E64051">
    <property type="entry name" value="E64051"/>
</dbReference>
<dbReference type="RefSeq" id="NP_438326.1">
    <property type="nucleotide sequence ID" value="NC_000907.1"/>
</dbReference>
<dbReference type="SMR" id="P43712"/>
<dbReference type="STRING" id="71421.HI_0156"/>
<dbReference type="EnsemblBacteria" id="AAC21825">
    <property type="protein sequence ID" value="AAC21825"/>
    <property type="gene ID" value="HI_0156"/>
</dbReference>
<dbReference type="KEGG" id="hin:HI_0156"/>
<dbReference type="PATRIC" id="fig|71421.8.peg.160"/>
<dbReference type="eggNOG" id="COG0331">
    <property type="taxonomic scope" value="Bacteria"/>
</dbReference>
<dbReference type="HOGENOM" id="CLU_030558_0_0_6"/>
<dbReference type="OrthoDB" id="9808564at2"/>
<dbReference type="PhylomeDB" id="P43712"/>
<dbReference type="BioCyc" id="HINF71421:G1GJ1-168-MONOMER"/>
<dbReference type="UniPathway" id="UPA00094"/>
<dbReference type="Proteomes" id="UP000000579">
    <property type="component" value="Chromosome"/>
</dbReference>
<dbReference type="GO" id="GO:0005829">
    <property type="term" value="C:cytosol"/>
    <property type="evidence" value="ECO:0000318"/>
    <property type="project" value="GO_Central"/>
</dbReference>
<dbReference type="GO" id="GO:0004314">
    <property type="term" value="F:[acyl-carrier-protein] S-malonyltransferase activity"/>
    <property type="evidence" value="ECO:0000318"/>
    <property type="project" value="GO_Central"/>
</dbReference>
<dbReference type="GO" id="GO:0006633">
    <property type="term" value="P:fatty acid biosynthetic process"/>
    <property type="evidence" value="ECO:0000318"/>
    <property type="project" value="GO_Central"/>
</dbReference>
<dbReference type="FunFam" id="3.30.70.250:FF:000001">
    <property type="entry name" value="Malonyl CoA-acyl carrier protein transacylase"/>
    <property type="match status" value="1"/>
</dbReference>
<dbReference type="Gene3D" id="3.30.70.250">
    <property type="entry name" value="Malonyl-CoA ACP transacylase, ACP-binding"/>
    <property type="match status" value="1"/>
</dbReference>
<dbReference type="Gene3D" id="3.40.366.10">
    <property type="entry name" value="Malonyl-Coenzyme A Acyl Carrier Protein, domain 2"/>
    <property type="match status" value="1"/>
</dbReference>
<dbReference type="InterPro" id="IPR001227">
    <property type="entry name" value="Ac_transferase_dom_sf"/>
</dbReference>
<dbReference type="InterPro" id="IPR014043">
    <property type="entry name" value="Acyl_transferase_dom"/>
</dbReference>
<dbReference type="InterPro" id="IPR016035">
    <property type="entry name" value="Acyl_Trfase/lysoPLipase"/>
</dbReference>
<dbReference type="InterPro" id="IPR050858">
    <property type="entry name" value="Mal-CoA-ACP_Trans/PKS_FabD"/>
</dbReference>
<dbReference type="InterPro" id="IPR024925">
    <property type="entry name" value="Malonyl_CoA-ACP_transAc"/>
</dbReference>
<dbReference type="InterPro" id="IPR004410">
    <property type="entry name" value="Malonyl_CoA-ACP_transAc_FabD"/>
</dbReference>
<dbReference type="InterPro" id="IPR016036">
    <property type="entry name" value="Malonyl_transacylase_ACP-bd"/>
</dbReference>
<dbReference type="NCBIfam" id="TIGR00128">
    <property type="entry name" value="fabD"/>
    <property type="match status" value="1"/>
</dbReference>
<dbReference type="PANTHER" id="PTHR42681">
    <property type="entry name" value="MALONYL-COA-ACYL CARRIER PROTEIN TRANSACYLASE, MITOCHONDRIAL"/>
    <property type="match status" value="1"/>
</dbReference>
<dbReference type="PANTHER" id="PTHR42681:SF1">
    <property type="entry name" value="MALONYL-COA-ACYL CARRIER PROTEIN TRANSACYLASE, MITOCHONDRIAL"/>
    <property type="match status" value="1"/>
</dbReference>
<dbReference type="Pfam" id="PF00698">
    <property type="entry name" value="Acyl_transf_1"/>
    <property type="match status" value="1"/>
</dbReference>
<dbReference type="PIRSF" id="PIRSF000446">
    <property type="entry name" value="Mct"/>
    <property type="match status" value="1"/>
</dbReference>
<dbReference type="SMART" id="SM00827">
    <property type="entry name" value="PKS_AT"/>
    <property type="match status" value="1"/>
</dbReference>
<dbReference type="SUPFAM" id="SSF52151">
    <property type="entry name" value="FabD/lysophospholipase-like"/>
    <property type="match status" value="1"/>
</dbReference>
<dbReference type="SUPFAM" id="SSF55048">
    <property type="entry name" value="Probable ACP-binding domain of malonyl-CoA ACP transacylase"/>
    <property type="match status" value="1"/>
</dbReference>
<evidence type="ECO:0000250" key="1"/>
<evidence type="ECO:0000305" key="2"/>
<accession>P43712</accession>
<proteinExistence type="inferred from homology"/>
<comment type="catalytic activity">
    <reaction>
        <text>holo-[ACP] + malonyl-CoA = malonyl-[ACP] + CoA</text>
        <dbReference type="Rhea" id="RHEA:41792"/>
        <dbReference type="Rhea" id="RHEA-COMP:9623"/>
        <dbReference type="Rhea" id="RHEA-COMP:9685"/>
        <dbReference type="ChEBI" id="CHEBI:57287"/>
        <dbReference type="ChEBI" id="CHEBI:57384"/>
        <dbReference type="ChEBI" id="CHEBI:64479"/>
        <dbReference type="ChEBI" id="CHEBI:78449"/>
        <dbReference type="EC" id="2.3.1.39"/>
    </reaction>
</comment>
<comment type="pathway">
    <text>Lipid metabolism; fatty acid biosynthesis.</text>
</comment>
<comment type="similarity">
    <text evidence="2">Belongs to the FabD family.</text>
</comment>
<feature type="chain" id="PRO_0000194216" description="Malonyl CoA-acyl carrier protein transacylase">
    <location>
        <begin position="1"/>
        <end position="312"/>
    </location>
</feature>
<feature type="active site" evidence="1">
    <location>
        <position position="93"/>
    </location>
</feature>
<feature type="active site" evidence="1">
    <location>
        <position position="202"/>
    </location>
</feature>
<gene>
    <name type="primary">fabD</name>
    <name type="ordered locus">HI_0156</name>
</gene>
<organism>
    <name type="scientific">Haemophilus influenzae (strain ATCC 51907 / DSM 11121 / KW20 / Rd)</name>
    <dbReference type="NCBI Taxonomy" id="71421"/>
    <lineage>
        <taxon>Bacteria</taxon>
        <taxon>Pseudomonadati</taxon>
        <taxon>Pseudomonadota</taxon>
        <taxon>Gammaproteobacteria</taxon>
        <taxon>Pasteurellales</taxon>
        <taxon>Pasteurellaceae</taxon>
        <taxon>Haemophilus</taxon>
    </lineage>
</organism>
<reference key="1">
    <citation type="journal article" date="1995" name="Science">
        <title>Whole-genome random sequencing and assembly of Haemophilus influenzae Rd.</title>
        <authorList>
            <person name="Fleischmann R.D."/>
            <person name="Adams M.D."/>
            <person name="White O."/>
            <person name="Clayton R.A."/>
            <person name="Kirkness E.F."/>
            <person name="Kerlavage A.R."/>
            <person name="Bult C.J."/>
            <person name="Tomb J.-F."/>
            <person name="Dougherty B.A."/>
            <person name="Merrick J.M."/>
            <person name="McKenney K."/>
            <person name="Sutton G.G."/>
            <person name="FitzHugh W."/>
            <person name="Fields C.A."/>
            <person name="Gocayne J.D."/>
            <person name="Scott J.D."/>
            <person name="Shirley R."/>
            <person name="Liu L.-I."/>
            <person name="Glodek A."/>
            <person name="Kelley J.M."/>
            <person name="Weidman J.F."/>
            <person name="Phillips C.A."/>
            <person name="Spriggs T."/>
            <person name="Hedblom E."/>
            <person name="Cotton M.D."/>
            <person name="Utterback T.R."/>
            <person name="Hanna M.C."/>
            <person name="Nguyen D.T."/>
            <person name="Saudek D.M."/>
            <person name="Brandon R.C."/>
            <person name="Fine L.D."/>
            <person name="Fritchman J.L."/>
            <person name="Fuhrmann J.L."/>
            <person name="Geoghagen N.S.M."/>
            <person name="Gnehm C.L."/>
            <person name="McDonald L.A."/>
            <person name="Small K.V."/>
            <person name="Fraser C.M."/>
            <person name="Smith H.O."/>
            <person name="Venter J.C."/>
        </authorList>
    </citation>
    <scope>NUCLEOTIDE SEQUENCE [LARGE SCALE GENOMIC DNA]</scope>
    <source>
        <strain>ATCC 51907 / DSM 11121 / KW20 / Rd</strain>
    </source>
</reference>
<keyword id="KW-0012">Acyltransferase</keyword>
<keyword id="KW-0275">Fatty acid biosynthesis</keyword>
<keyword id="KW-0276">Fatty acid metabolism</keyword>
<keyword id="KW-0444">Lipid biosynthesis</keyword>
<keyword id="KW-0443">Lipid metabolism</keyword>
<keyword id="KW-1185">Reference proteome</keyword>
<keyword id="KW-0808">Transferase</keyword>
<sequence length="312" mass="33425">MKKFAMVFPGQGSQTVGMLADLATEYPIVIETFKQASDALGYDLWYLVQQGPAEELNKTWQTQPALLAASVAIYRVWKEKFPQLKPEVMAGHSLGEYSALVCAGVLDFQDAIKLVELRGKLMQQAVPEGTGAMYAIIGLDNEAIINACKQAEEGEVVSAVNFNSPGQVVIAGAKAAVERAAALCKEAGAKRALPLAVSVPSHCALMKPAAEQLAVTLENIQINTPTISVLNNVDVKAETEGTEIRTALVRQLYSPVRWTETVEKMAQDGVLVLAEVGPGKVLNGLTKRIVGDLQAISVNDVASFNAVEEFLV</sequence>
<name>FABD_HAEIN</name>
<protein>
    <recommendedName>
        <fullName>Malonyl CoA-acyl carrier protein transacylase</fullName>
        <shortName>MCT</shortName>
        <ecNumber>2.3.1.39</ecNumber>
    </recommendedName>
</protein>